<keyword id="KW-0067">ATP-binding</keyword>
<keyword id="KW-0963">Cytoplasm</keyword>
<keyword id="KW-0418">Kinase</keyword>
<keyword id="KW-0460">Magnesium</keyword>
<keyword id="KW-0479">Metal-binding</keyword>
<keyword id="KW-0546">Nucleotide metabolism</keyword>
<keyword id="KW-0547">Nucleotide-binding</keyword>
<keyword id="KW-0597">Phosphoprotein</keyword>
<keyword id="KW-0808">Transferase</keyword>
<gene>
    <name evidence="1" type="primary">ndk</name>
    <name type="ordered locus">CbuK_1117</name>
</gene>
<evidence type="ECO:0000255" key="1">
    <source>
        <dbReference type="HAMAP-Rule" id="MF_00451"/>
    </source>
</evidence>
<feature type="chain" id="PRO_1000124950" description="Nucleoside diphosphate kinase">
    <location>
        <begin position="1"/>
        <end position="139"/>
    </location>
</feature>
<feature type="active site" description="Pros-phosphohistidine intermediate" evidence="1">
    <location>
        <position position="117"/>
    </location>
</feature>
<feature type="binding site" evidence="1">
    <location>
        <position position="11"/>
    </location>
    <ligand>
        <name>ATP</name>
        <dbReference type="ChEBI" id="CHEBI:30616"/>
    </ligand>
</feature>
<feature type="binding site" evidence="1">
    <location>
        <position position="59"/>
    </location>
    <ligand>
        <name>ATP</name>
        <dbReference type="ChEBI" id="CHEBI:30616"/>
    </ligand>
</feature>
<feature type="binding site" evidence="1">
    <location>
        <position position="87"/>
    </location>
    <ligand>
        <name>ATP</name>
        <dbReference type="ChEBI" id="CHEBI:30616"/>
    </ligand>
</feature>
<feature type="binding site" evidence="1">
    <location>
        <position position="93"/>
    </location>
    <ligand>
        <name>ATP</name>
        <dbReference type="ChEBI" id="CHEBI:30616"/>
    </ligand>
</feature>
<feature type="binding site" evidence="1">
    <location>
        <position position="104"/>
    </location>
    <ligand>
        <name>ATP</name>
        <dbReference type="ChEBI" id="CHEBI:30616"/>
    </ligand>
</feature>
<feature type="binding site" evidence="1">
    <location>
        <position position="114"/>
    </location>
    <ligand>
        <name>ATP</name>
        <dbReference type="ChEBI" id="CHEBI:30616"/>
    </ligand>
</feature>
<protein>
    <recommendedName>
        <fullName evidence="1">Nucleoside diphosphate kinase</fullName>
        <shortName evidence="1">NDK</shortName>
        <shortName evidence="1">NDP kinase</shortName>
        <ecNumber evidence="1">2.7.4.6</ecNumber>
    </recommendedName>
    <alternativeName>
        <fullName evidence="1">Nucleoside-2-P kinase</fullName>
    </alternativeName>
</protein>
<reference key="1">
    <citation type="journal article" date="2009" name="Infect. Immun.">
        <title>Comparative genomics reveal extensive transposon-mediated genomic plasticity and diversity among potential effector proteins within the genus Coxiella.</title>
        <authorList>
            <person name="Beare P.A."/>
            <person name="Unsworth N."/>
            <person name="Andoh M."/>
            <person name="Voth D.E."/>
            <person name="Omsland A."/>
            <person name="Gilk S.D."/>
            <person name="Williams K.P."/>
            <person name="Sobral B.W."/>
            <person name="Kupko J.J. III"/>
            <person name="Porcella S.F."/>
            <person name="Samuel J.E."/>
            <person name="Heinzen R.A."/>
        </authorList>
    </citation>
    <scope>NUCLEOTIDE SEQUENCE [LARGE SCALE GENOMIC DNA]</scope>
    <source>
        <strain>CbuK_Q154</strain>
    </source>
</reference>
<dbReference type="EC" id="2.7.4.6" evidence="1"/>
<dbReference type="EMBL" id="CP001020">
    <property type="protein sequence ID" value="ACJ20312.1"/>
    <property type="molecule type" value="Genomic_DNA"/>
</dbReference>
<dbReference type="SMR" id="B6J7R3"/>
<dbReference type="KEGG" id="cbc:CbuK_1117"/>
<dbReference type="HOGENOM" id="CLU_060216_8_1_6"/>
<dbReference type="GO" id="GO:0005737">
    <property type="term" value="C:cytoplasm"/>
    <property type="evidence" value="ECO:0007669"/>
    <property type="project" value="UniProtKB-SubCell"/>
</dbReference>
<dbReference type="GO" id="GO:0005524">
    <property type="term" value="F:ATP binding"/>
    <property type="evidence" value="ECO:0007669"/>
    <property type="project" value="UniProtKB-UniRule"/>
</dbReference>
<dbReference type="GO" id="GO:0046872">
    <property type="term" value="F:metal ion binding"/>
    <property type="evidence" value="ECO:0007669"/>
    <property type="project" value="UniProtKB-KW"/>
</dbReference>
<dbReference type="GO" id="GO:0004550">
    <property type="term" value="F:nucleoside diphosphate kinase activity"/>
    <property type="evidence" value="ECO:0007669"/>
    <property type="project" value="UniProtKB-UniRule"/>
</dbReference>
<dbReference type="GO" id="GO:0006241">
    <property type="term" value="P:CTP biosynthetic process"/>
    <property type="evidence" value="ECO:0007669"/>
    <property type="project" value="UniProtKB-UniRule"/>
</dbReference>
<dbReference type="GO" id="GO:0006183">
    <property type="term" value="P:GTP biosynthetic process"/>
    <property type="evidence" value="ECO:0007669"/>
    <property type="project" value="UniProtKB-UniRule"/>
</dbReference>
<dbReference type="GO" id="GO:0006228">
    <property type="term" value="P:UTP biosynthetic process"/>
    <property type="evidence" value="ECO:0007669"/>
    <property type="project" value="UniProtKB-UniRule"/>
</dbReference>
<dbReference type="CDD" id="cd04413">
    <property type="entry name" value="NDPk_I"/>
    <property type="match status" value="1"/>
</dbReference>
<dbReference type="FunFam" id="3.30.70.141:FF:000001">
    <property type="entry name" value="Nucleoside diphosphate kinase"/>
    <property type="match status" value="1"/>
</dbReference>
<dbReference type="Gene3D" id="3.30.70.141">
    <property type="entry name" value="Nucleoside diphosphate kinase-like domain"/>
    <property type="match status" value="1"/>
</dbReference>
<dbReference type="HAMAP" id="MF_00451">
    <property type="entry name" value="NDP_kinase"/>
    <property type="match status" value="1"/>
</dbReference>
<dbReference type="InterPro" id="IPR034907">
    <property type="entry name" value="NDK-like_dom"/>
</dbReference>
<dbReference type="InterPro" id="IPR036850">
    <property type="entry name" value="NDK-like_dom_sf"/>
</dbReference>
<dbReference type="InterPro" id="IPR001564">
    <property type="entry name" value="Nucleoside_diP_kinase"/>
</dbReference>
<dbReference type="InterPro" id="IPR023005">
    <property type="entry name" value="Nucleoside_diP_kinase_AS"/>
</dbReference>
<dbReference type="NCBIfam" id="NF001908">
    <property type="entry name" value="PRK00668.1"/>
    <property type="match status" value="1"/>
</dbReference>
<dbReference type="PANTHER" id="PTHR11349">
    <property type="entry name" value="NUCLEOSIDE DIPHOSPHATE KINASE"/>
    <property type="match status" value="1"/>
</dbReference>
<dbReference type="Pfam" id="PF00334">
    <property type="entry name" value="NDK"/>
    <property type="match status" value="1"/>
</dbReference>
<dbReference type="PRINTS" id="PR01243">
    <property type="entry name" value="NUCDPKINASE"/>
</dbReference>
<dbReference type="SMART" id="SM00562">
    <property type="entry name" value="NDK"/>
    <property type="match status" value="1"/>
</dbReference>
<dbReference type="SUPFAM" id="SSF54919">
    <property type="entry name" value="Nucleoside diphosphate kinase, NDK"/>
    <property type="match status" value="1"/>
</dbReference>
<dbReference type="PROSITE" id="PS00469">
    <property type="entry name" value="NDPK"/>
    <property type="match status" value="1"/>
</dbReference>
<dbReference type="PROSITE" id="PS51374">
    <property type="entry name" value="NDPK_LIKE"/>
    <property type="match status" value="1"/>
</dbReference>
<proteinExistence type="inferred from homology"/>
<comment type="function">
    <text evidence="1">Major role in the synthesis of nucleoside triphosphates other than ATP. The ATP gamma phosphate is transferred to the NDP beta phosphate via a ping-pong mechanism, using a phosphorylated active-site intermediate.</text>
</comment>
<comment type="catalytic activity">
    <reaction evidence="1">
        <text>a 2'-deoxyribonucleoside 5'-diphosphate + ATP = a 2'-deoxyribonucleoside 5'-triphosphate + ADP</text>
        <dbReference type="Rhea" id="RHEA:44640"/>
        <dbReference type="ChEBI" id="CHEBI:30616"/>
        <dbReference type="ChEBI" id="CHEBI:61560"/>
        <dbReference type="ChEBI" id="CHEBI:73316"/>
        <dbReference type="ChEBI" id="CHEBI:456216"/>
        <dbReference type="EC" id="2.7.4.6"/>
    </reaction>
</comment>
<comment type="catalytic activity">
    <reaction evidence="1">
        <text>a ribonucleoside 5'-diphosphate + ATP = a ribonucleoside 5'-triphosphate + ADP</text>
        <dbReference type="Rhea" id="RHEA:18113"/>
        <dbReference type="ChEBI" id="CHEBI:30616"/>
        <dbReference type="ChEBI" id="CHEBI:57930"/>
        <dbReference type="ChEBI" id="CHEBI:61557"/>
        <dbReference type="ChEBI" id="CHEBI:456216"/>
        <dbReference type="EC" id="2.7.4.6"/>
    </reaction>
</comment>
<comment type="cofactor">
    <cofactor evidence="1">
        <name>Mg(2+)</name>
        <dbReference type="ChEBI" id="CHEBI:18420"/>
    </cofactor>
</comment>
<comment type="subunit">
    <text evidence="1">Homotetramer.</text>
</comment>
<comment type="subcellular location">
    <subcellularLocation>
        <location evidence="1">Cytoplasm</location>
    </subcellularLocation>
</comment>
<comment type="similarity">
    <text evidence="1">Belongs to the NDK family.</text>
</comment>
<sequence>MAIERTLSIIKPDAVAKNVIGQIYSRFEKAGLKIISAKMCHLSKPQAEKFYAVHKDRPFYPDLVKFMTQGPVMIQVLEGENAIVKNREIMGATNPKEALPGTIRADFADSIDANAVHGSDGPETAKEEIAFFFKPDEIF</sequence>
<accession>B6J7R3</accession>
<name>NDK_COXB1</name>
<organism>
    <name type="scientific">Coxiella burnetii (strain CbuK_Q154)</name>
    <name type="common">Coxiella burnetii (strain Q154)</name>
    <dbReference type="NCBI Taxonomy" id="434924"/>
    <lineage>
        <taxon>Bacteria</taxon>
        <taxon>Pseudomonadati</taxon>
        <taxon>Pseudomonadota</taxon>
        <taxon>Gammaproteobacteria</taxon>
        <taxon>Legionellales</taxon>
        <taxon>Coxiellaceae</taxon>
        <taxon>Coxiella</taxon>
    </lineage>
</organism>